<comment type="function">
    <text evidence="4 6 7 8">Methyltransferase involved in the biosynthesis of methylsalicylate in response to stresses. Utilizes salicylic acid (SA) more efficiently than benzoic acid (BA). Can also use anthranilic acid and m-hydroxybenzoic acid as substrate.</text>
</comment>
<comment type="catalytic activity">
    <reaction evidence="4">
        <text>benzoate + S-adenosyl-L-methionine = methyl benzoate + S-adenosyl-L-homocysteine</text>
        <dbReference type="Rhea" id="RHEA:36099"/>
        <dbReference type="ChEBI" id="CHEBI:16150"/>
        <dbReference type="ChEBI" id="CHEBI:57856"/>
        <dbReference type="ChEBI" id="CHEBI:59789"/>
        <dbReference type="ChEBI" id="CHEBI:72775"/>
        <dbReference type="EC" id="2.1.1.273"/>
    </reaction>
</comment>
<comment type="catalytic activity">
    <reaction evidence="4">
        <text>salicylate + S-adenosyl-L-methionine = methyl salicylate + S-adenosyl-L-homocysteine</text>
        <dbReference type="Rhea" id="RHEA:36095"/>
        <dbReference type="ChEBI" id="CHEBI:30762"/>
        <dbReference type="ChEBI" id="CHEBI:31832"/>
        <dbReference type="ChEBI" id="CHEBI:57856"/>
        <dbReference type="ChEBI" id="CHEBI:59789"/>
        <dbReference type="EC" id="2.1.1.274"/>
    </reaction>
</comment>
<comment type="cofactor">
    <cofactor evidence="3">
        <name>Mg(2+)</name>
        <dbReference type="ChEBI" id="CHEBI:18420"/>
    </cofactor>
    <text evidence="3">Binds 1 Mg(2+) ion per subunit.</text>
</comment>
<comment type="biophysicochemical properties">
    <kinetics>
        <KM evidence="4">67 uM for S-adenosyl-L-methionine</KM>
        <KM evidence="4">65 uM for benzoic acid</KM>
        <KM evidence="4">16 uM for salicylic acid</KM>
        <text>kcat is 0.19 sec(-1) for benzoic acid. kcat is 0.07 sec(-1) for salicylic acid.</text>
    </kinetics>
    <phDependence>
        <text evidence="4">Optimum pH is 7.0-8.0.</text>
    </phDependence>
</comment>
<comment type="subunit">
    <text evidence="4">Homodimer.</text>
</comment>
<comment type="tissue specificity">
    <text evidence="4">Expressed in flowers and at lower levels in leaves and stems. Hardly detected in roots and siliques. Expressed in the sepals and the leaf trichomes and hydathodes.</text>
</comment>
<comment type="induction">
    <text evidence="4 5">Up-regulated by alamethicin, herbivory, uprooting, woundingd, jasmonic acid and methyl jasmonate, but not by salicylic acid. Induced specifically around the lesions.</text>
</comment>
<comment type="disruption phenotype">
    <text evidence="6 7 8">Loss of accumulation of methyl salicylate upon pathogen infection, no accumulation of salicylic acid or its glucoside in uninoculated leaves and no development of systemic acquired resistance. Increased attractivity to parasitoids.</text>
</comment>
<comment type="similarity">
    <text evidence="9">Belongs to the methyltransferase superfamily. Type-7 methyltransferase family. SABATH subfamily.</text>
</comment>
<comment type="sequence caution" evidence="9">
    <conflict type="erroneous gene model prediction">
        <sequence resource="EMBL-CDS" id="AAG51446"/>
    </conflict>
</comment>
<gene>
    <name type="primary">BSMT1</name>
    <name type="ordered locus">At3g11480</name>
    <name type="ORF">F24K9.15</name>
</gene>
<sequence length="379" mass="43365">MDPRFINTIPSLRYDDDKCDDEYAFVKALCMSGGDGANSYSANSRLQKKVLSMAKPVLVRNTEEMMMNLDFPTYIKVAELGCSSGQNSFLAIFEIINTINVLCQHVNKNSPEIDCCLNDLPENDFNTTFKFVPFFNKELMITNKSSCFVYGAPGSFYSRLFSRNSLHLIHSSYALHWLSKVPEKLENNKGNLYITSSSPQSAYKAYLNQFQKDFTMFLRLRSEEIVSNGRMVLTFIGRNTLNDPLYRDCCHFWTLLSNSLRDLVFEGLVSESKLDAFNMPFYDPNVQELKEVIQKEGSFEINELESHGFDLGHYYEEDDFEAGRNEANGIRAVSEPMLIAHFGEEIIDTLFDKYAYHVTQHANCRNKTTVSLVVSLTKK</sequence>
<feature type="chain" id="PRO_0000422309" description="Salicylate/benzoate carboxyl methyltransferase">
    <location>
        <begin position="1"/>
        <end position="379"/>
    </location>
</feature>
<feature type="binding site" evidence="2">
    <location>
        <position position="40"/>
    </location>
    <ligand>
        <name>S-adenosyl-L-homocysteine</name>
        <dbReference type="ChEBI" id="CHEBI:57856"/>
    </ligand>
</feature>
<feature type="binding site" evidence="2">
    <location>
        <position position="47"/>
    </location>
    <ligand>
        <name>salicylate</name>
        <dbReference type="ChEBI" id="CHEBI:30762"/>
    </ligand>
</feature>
<feature type="binding site" evidence="2">
    <location>
        <position position="82"/>
    </location>
    <ligand>
        <name>S-adenosyl-L-homocysteine</name>
        <dbReference type="ChEBI" id="CHEBI:57856"/>
    </ligand>
</feature>
<feature type="binding site" evidence="2">
    <location>
        <position position="87"/>
    </location>
    <ligand>
        <name>S-adenosyl-L-homocysteine</name>
        <dbReference type="ChEBI" id="CHEBI:57856"/>
    </ligand>
</feature>
<feature type="binding site" evidence="2">
    <location>
        <position position="119"/>
    </location>
    <ligand>
        <name>S-adenosyl-L-homocysteine</name>
        <dbReference type="ChEBI" id="CHEBI:57856"/>
    </ligand>
</feature>
<feature type="binding site" evidence="1">
    <location>
        <position position="120"/>
    </location>
    <ligand>
        <name>S-adenosyl-L-homocysteine</name>
        <dbReference type="ChEBI" id="CHEBI:57856"/>
    </ligand>
</feature>
<feature type="binding site" evidence="2">
    <location>
        <position position="155"/>
    </location>
    <ligand>
        <name>S-adenosyl-L-homocysteine</name>
        <dbReference type="ChEBI" id="CHEBI:57856"/>
    </ligand>
</feature>
<feature type="binding site" evidence="2">
    <location>
        <position position="156"/>
    </location>
    <ligand>
        <name>S-adenosyl-L-homocysteine</name>
        <dbReference type="ChEBI" id="CHEBI:57856"/>
    </ligand>
</feature>
<feature type="binding site" evidence="2">
    <location>
        <position position="176"/>
    </location>
    <ligand>
        <name>salicylate</name>
        <dbReference type="ChEBI" id="CHEBI:30762"/>
    </ligand>
</feature>
<feature type="binding site" evidence="2">
    <location>
        <position position="177"/>
    </location>
    <ligand>
        <name>salicylate</name>
        <dbReference type="ChEBI" id="CHEBI:30762"/>
    </ligand>
</feature>
<feature type="binding site" evidence="3">
    <location>
        <position position="188"/>
    </location>
    <ligand>
        <name>Mg(2+)</name>
        <dbReference type="ChEBI" id="CHEBI:18420"/>
    </ligand>
</feature>
<feature type="binding site" evidence="3">
    <location>
        <position position="275"/>
    </location>
    <ligand>
        <name>Mg(2+)</name>
        <dbReference type="ChEBI" id="CHEBI:18420"/>
    </ligand>
</feature>
<feature type="binding site" evidence="3">
    <location>
        <position position="277"/>
    </location>
    <ligand>
        <name>Mg(2+)</name>
        <dbReference type="ChEBI" id="CHEBI:18420"/>
    </ligand>
</feature>
<feature type="binding site" evidence="3">
    <location>
        <position position="278"/>
    </location>
    <ligand>
        <name>Mg(2+)</name>
        <dbReference type="ChEBI" id="CHEBI:18420"/>
    </ligand>
</feature>
<protein>
    <recommendedName>
        <fullName>Salicylate/benzoate carboxyl methyltransferase</fullName>
    </recommendedName>
    <alternativeName>
        <fullName>Benzoate O-methyltransferase</fullName>
        <ecNumber>2.1.1.273</ecNumber>
    </alternativeName>
    <alternativeName>
        <fullName>S-adenosyl-L-methionine:benzoic acid carboxyl methyltransferase</fullName>
    </alternativeName>
    <alternativeName>
        <fullName>S-adenosyl-L-methionine:salicylate acid carboxyl methyltransferase</fullName>
    </alternativeName>
    <alternativeName>
        <fullName>SABATH methyltransferase</fullName>
    </alternativeName>
    <alternativeName>
        <fullName>Salicylate carboxymethyltransferase</fullName>
        <ecNumber>2.1.1.274</ecNumber>
    </alternativeName>
</protein>
<reference key="1">
    <citation type="journal article" date="2003" name="Plant J.">
        <title>An Arabidopsis thaliana gene for methylsalicylate biosynthesis, identified by a biochemical genomics approach, has a role in defense.</title>
        <authorList>
            <person name="Chen F."/>
            <person name="D'Auria J.C."/>
            <person name="Tholl D."/>
            <person name="Ross J.R."/>
            <person name="Gershenzon J."/>
            <person name="Noel J.P."/>
            <person name="Pichersky E."/>
        </authorList>
    </citation>
    <scope>NUCLEOTIDE SEQUENCE [MRNA]</scope>
    <scope>FUNCTION</scope>
    <scope>CATALYTIC ACTIVITY</scope>
    <scope>BIOPHYSICOCHEMICAL PROPERTIES</scope>
    <scope>TISSUE SPECIFICITY</scope>
    <scope>INDUCTION BY BIOTIC AND ABIOTIC STRESSES</scope>
    <scope>SUBUNIT</scope>
    <source>
        <strain>cv. Columbia</strain>
    </source>
</reference>
<reference key="2">
    <citation type="journal article" date="2000" name="Nature">
        <title>Sequence and analysis of chromosome 3 of the plant Arabidopsis thaliana.</title>
        <authorList>
            <person name="Salanoubat M."/>
            <person name="Lemcke K."/>
            <person name="Rieger M."/>
            <person name="Ansorge W."/>
            <person name="Unseld M."/>
            <person name="Fartmann B."/>
            <person name="Valle G."/>
            <person name="Bloecker H."/>
            <person name="Perez-Alonso M."/>
            <person name="Obermaier B."/>
            <person name="Delseny M."/>
            <person name="Boutry M."/>
            <person name="Grivell L.A."/>
            <person name="Mache R."/>
            <person name="Puigdomenech P."/>
            <person name="De Simone V."/>
            <person name="Choisne N."/>
            <person name="Artiguenave F."/>
            <person name="Robert C."/>
            <person name="Brottier P."/>
            <person name="Wincker P."/>
            <person name="Cattolico L."/>
            <person name="Weissenbach J."/>
            <person name="Saurin W."/>
            <person name="Quetier F."/>
            <person name="Schaefer M."/>
            <person name="Mueller-Auer S."/>
            <person name="Gabel C."/>
            <person name="Fuchs M."/>
            <person name="Benes V."/>
            <person name="Wurmbach E."/>
            <person name="Drzonek H."/>
            <person name="Erfle H."/>
            <person name="Jordan N."/>
            <person name="Bangert S."/>
            <person name="Wiedelmann R."/>
            <person name="Kranz H."/>
            <person name="Voss H."/>
            <person name="Holland R."/>
            <person name="Brandt P."/>
            <person name="Nyakatura G."/>
            <person name="Vezzi A."/>
            <person name="D'Angelo M."/>
            <person name="Pallavicini A."/>
            <person name="Toppo S."/>
            <person name="Simionati B."/>
            <person name="Conrad A."/>
            <person name="Hornischer K."/>
            <person name="Kauer G."/>
            <person name="Loehnert T.-H."/>
            <person name="Nordsiek G."/>
            <person name="Reichelt J."/>
            <person name="Scharfe M."/>
            <person name="Schoen O."/>
            <person name="Bargues M."/>
            <person name="Terol J."/>
            <person name="Climent J."/>
            <person name="Navarro P."/>
            <person name="Collado C."/>
            <person name="Perez-Perez A."/>
            <person name="Ottenwaelder B."/>
            <person name="Duchemin D."/>
            <person name="Cooke R."/>
            <person name="Laudie M."/>
            <person name="Berger-Llauro C."/>
            <person name="Purnelle B."/>
            <person name="Masuy D."/>
            <person name="de Haan M."/>
            <person name="Maarse A.C."/>
            <person name="Alcaraz J.-P."/>
            <person name="Cottet A."/>
            <person name="Casacuberta E."/>
            <person name="Monfort A."/>
            <person name="Argiriou A."/>
            <person name="Flores M."/>
            <person name="Liguori R."/>
            <person name="Vitale D."/>
            <person name="Mannhaupt G."/>
            <person name="Haase D."/>
            <person name="Schoof H."/>
            <person name="Rudd S."/>
            <person name="Zaccaria P."/>
            <person name="Mewes H.-W."/>
            <person name="Mayer K.F.X."/>
            <person name="Kaul S."/>
            <person name="Town C.D."/>
            <person name="Koo H.L."/>
            <person name="Tallon L.J."/>
            <person name="Jenkins J."/>
            <person name="Rooney T."/>
            <person name="Rizzo M."/>
            <person name="Walts A."/>
            <person name="Utterback T."/>
            <person name="Fujii C.Y."/>
            <person name="Shea T.P."/>
            <person name="Creasy T.H."/>
            <person name="Haas B."/>
            <person name="Maiti R."/>
            <person name="Wu D."/>
            <person name="Peterson J."/>
            <person name="Van Aken S."/>
            <person name="Pai G."/>
            <person name="Militscher J."/>
            <person name="Sellers P."/>
            <person name="Gill J.E."/>
            <person name="Feldblyum T.V."/>
            <person name="Preuss D."/>
            <person name="Lin X."/>
            <person name="Nierman W.C."/>
            <person name="Salzberg S.L."/>
            <person name="White O."/>
            <person name="Venter J.C."/>
            <person name="Fraser C.M."/>
            <person name="Kaneko T."/>
            <person name="Nakamura Y."/>
            <person name="Sato S."/>
            <person name="Kato T."/>
            <person name="Asamizu E."/>
            <person name="Sasamoto S."/>
            <person name="Kimura T."/>
            <person name="Idesawa K."/>
            <person name="Kawashima K."/>
            <person name="Kishida Y."/>
            <person name="Kiyokawa C."/>
            <person name="Kohara M."/>
            <person name="Matsumoto M."/>
            <person name="Matsuno A."/>
            <person name="Muraki A."/>
            <person name="Nakayama S."/>
            <person name="Nakazaki N."/>
            <person name="Shinpo S."/>
            <person name="Takeuchi C."/>
            <person name="Wada T."/>
            <person name="Watanabe A."/>
            <person name="Yamada M."/>
            <person name="Yasuda M."/>
            <person name="Tabata S."/>
        </authorList>
    </citation>
    <scope>NUCLEOTIDE SEQUENCE [LARGE SCALE GENOMIC DNA]</scope>
    <source>
        <strain>cv. Columbia</strain>
    </source>
</reference>
<reference key="3">
    <citation type="journal article" date="2017" name="Plant J.">
        <title>Araport11: a complete reannotation of the Arabidopsis thaliana reference genome.</title>
        <authorList>
            <person name="Cheng C.Y."/>
            <person name="Krishnakumar V."/>
            <person name="Chan A.P."/>
            <person name="Thibaud-Nissen F."/>
            <person name="Schobel S."/>
            <person name="Town C.D."/>
        </authorList>
    </citation>
    <scope>GENOME REANNOTATION</scope>
    <source>
        <strain>cv. Columbia</strain>
    </source>
</reference>
<reference key="4">
    <citation type="submission" date="2005-05" db="EMBL/GenBank/DDBJ databases">
        <title>Arabidopsis ORF clones.</title>
        <authorList>
            <person name="Cheuk R."/>
            <person name="Chen H."/>
            <person name="Kim C.J."/>
            <person name="Shinn P."/>
            <person name="Ecker J.R."/>
        </authorList>
    </citation>
    <scope>NUCLEOTIDE SEQUENCE [LARGE SCALE MRNA]</scope>
</reference>
<reference key="5">
    <citation type="submission" date="2005-03" db="EMBL/GenBank/DDBJ databases">
        <title>Large-scale analysis of RIKEN Arabidopsis full-length (RAFL) cDNAs.</title>
        <authorList>
            <person name="Totoki Y."/>
            <person name="Seki M."/>
            <person name="Ishida J."/>
            <person name="Nakajima M."/>
            <person name="Enju A."/>
            <person name="Kamiya A."/>
            <person name="Narusaka M."/>
            <person name="Shin-i T."/>
            <person name="Nakagawa M."/>
            <person name="Sakamoto N."/>
            <person name="Oishi K."/>
            <person name="Kohara Y."/>
            <person name="Kobayashi M."/>
            <person name="Toyoda A."/>
            <person name="Sakaki Y."/>
            <person name="Sakurai T."/>
            <person name="Iida K."/>
            <person name="Akiyama K."/>
            <person name="Satou M."/>
            <person name="Toyoda T."/>
            <person name="Konagaya A."/>
            <person name="Carninci P."/>
            <person name="Kawai J."/>
            <person name="Hayashizaki Y."/>
            <person name="Shinozaki K."/>
        </authorList>
    </citation>
    <scope>NUCLEOTIDE SEQUENCE [LARGE SCALE MRNA]</scope>
    <source>
        <strain>cv. Columbia</strain>
    </source>
</reference>
<reference key="6">
    <citation type="journal article" date="2007" name="Plant Mol. Biol.">
        <title>Overexpression of salicylic acid carboxyl methyltransferase reduces salicylic acid-mediated pathogen resistance in Arabidopsis thaliana.</title>
        <authorList>
            <person name="Koo Y.J."/>
            <person name="Kim M.A."/>
            <person name="Kim E.H."/>
            <person name="Song J.T."/>
            <person name="Jung C."/>
            <person name="Moon J.K."/>
            <person name="Kim J.H."/>
            <person name="Seo H.S."/>
            <person name="Song S.I."/>
            <person name="Kim J.K."/>
            <person name="Lee J.S."/>
            <person name="Cheong J.J."/>
            <person name="Choi Y.D."/>
        </authorList>
    </citation>
    <scope>INDUCTION BY JASMONIC ACID</scope>
</reference>
<reference key="7">
    <citation type="journal article" date="2009" name="Mol. Cells">
        <title>The expression patterns of AtBSMT1 and AtSAGT1 encoding a salicylic acid (SA) methyltransferase and a SA glucosyltransferase, respectively, in Arabidopsis plants with altered defense responses.</title>
        <authorList>
            <person name="Song J.T."/>
            <person name="Koo Y.J."/>
            <person name="Park J.B."/>
            <person name="Seo Y.J."/>
            <person name="Cho Y.J."/>
            <person name="Seo H.S."/>
            <person name="Choi Y.D."/>
        </authorList>
    </citation>
    <scope>FUNCTION</scope>
    <scope>DISRUPTION PHENOTYPE</scope>
</reference>
<reference key="8">
    <citation type="journal article" date="2010" name="J. Chem. Ecol.">
        <title>The herbivore-induced plant volatile methyl salicylate negatively affects attraction of the parasitoid Diadegma semiclausum.</title>
        <authorList>
            <person name="Snoeren T.A."/>
            <person name="Mumm R."/>
            <person name="Poelman E.H."/>
            <person name="Yang Y."/>
            <person name="Pichersky E."/>
            <person name="Dicke M."/>
        </authorList>
    </citation>
    <scope>FUNCTION</scope>
    <scope>DISRUPTION PHENOTYPE</scope>
</reference>
<reference key="9">
    <citation type="journal article" date="2010" name="Mol. Plant Microbe Interact.">
        <title>Altering expression of benzoic acid/salicylic acid carboxyl methyltransferase 1 compromises systemic acquired resistance and PAMP-triggered immunity in arabidopsis.</title>
        <authorList>
            <person name="Liu P.P."/>
            <person name="Yang Y."/>
            <person name="Pichersky E."/>
            <person name="Klessig D.F."/>
        </authorList>
    </citation>
    <scope>FUNCTION</scope>
    <scope>DISRUPTION PHENOTYPE</scope>
</reference>
<name>BSMT1_ARATH</name>
<keyword id="KW-0460">Magnesium</keyword>
<keyword id="KW-0479">Metal-binding</keyword>
<keyword id="KW-0489">Methyltransferase</keyword>
<keyword id="KW-0611">Plant defense</keyword>
<keyword id="KW-1185">Reference proteome</keyword>
<keyword id="KW-0949">S-adenosyl-L-methionine</keyword>
<keyword id="KW-0808">Transferase</keyword>
<evidence type="ECO:0000250" key="1">
    <source>
        <dbReference type="UniProtKB" id="A0A6C0WW36"/>
    </source>
</evidence>
<evidence type="ECO:0000250" key="2">
    <source>
        <dbReference type="UniProtKB" id="B2KPR3"/>
    </source>
</evidence>
<evidence type="ECO:0000250" key="3">
    <source>
        <dbReference type="UniProtKB" id="Q9FLN8"/>
    </source>
</evidence>
<evidence type="ECO:0000269" key="4">
    <source>
    </source>
</evidence>
<evidence type="ECO:0000269" key="5">
    <source>
    </source>
</evidence>
<evidence type="ECO:0000269" key="6">
    <source>
    </source>
</evidence>
<evidence type="ECO:0000269" key="7">
    <source>
    </source>
</evidence>
<evidence type="ECO:0000269" key="8">
    <source>
    </source>
</evidence>
<evidence type="ECO:0000305" key="9"/>
<accession>Q6XMI3</accession>
<accession>Q9CAX9</accession>
<dbReference type="EC" id="2.1.1.273"/>
<dbReference type="EC" id="2.1.1.274"/>
<dbReference type="EMBL" id="AY224595">
    <property type="protein sequence ID" value="AAP57210.1"/>
    <property type="molecule type" value="mRNA"/>
</dbReference>
<dbReference type="EMBL" id="AC008153">
    <property type="protein sequence ID" value="AAG51446.1"/>
    <property type="status" value="ALT_SEQ"/>
    <property type="molecule type" value="Genomic_DNA"/>
</dbReference>
<dbReference type="EMBL" id="CP002686">
    <property type="protein sequence ID" value="AEE75053.1"/>
    <property type="molecule type" value="Genomic_DNA"/>
</dbReference>
<dbReference type="EMBL" id="BT022049">
    <property type="protein sequence ID" value="AAY25461.1"/>
    <property type="molecule type" value="mRNA"/>
</dbReference>
<dbReference type="EMBL" id="AK221911">
    <property type="protein sequence ID" value="BAD94303.1"/>
    <property type="molecule type" value="mRNA"/>
</dbReference>
<dbReference type="RefSeq" id="NP_187755.2">
    <property type="nucleotide sequence ID" value="NM_111981.5"/>
</dbReference>
<dbReference type="SMR" id="Q6XMI3"/>
<dbReference type="STRING" id="3702.Q6XMI3"/>
<dbReference type="PaxDb" id="3702-AT3G11480.1"/>
<dbReference type="ProteomicsDB" id="240291"/>
<dbReference type="EnsemblPlants" id="AT3G11480.1">
    <property type="protein sequence ID" value="AT3G11480.1"/>
    <property type="gene ID" value="AT3G11480"/>
</dbReference>
<dbReference type="GeneID" id="820321"/>
<dbReference type="Gramene" id="AT3G11480.1">
    <property type="protein sequence ID" value="AT3G11480.1"/>
    <property type="gene ID" value="AT3G11480"/>
</dbReference>
<dbReference type="KEGG" id="ath:AT3G11480"/>
<dbReference type="Araport" id="AT3G11480"/>
<dbReference type="TAIR" id="AT3G11480">
    <property type="gene designation" value="BSMT1"/>
</dbReference>
<dbReference type="eggNOG" id="ENOG502QQVK">
    <property type="taxonomic scope" value="Eukaryota"/>
</dbReference>
<dbReference type="HOGENOM" id="CLU_019628_2_1_1"/>
<dbReference type="InParanoid" id="Q6XMI3"/>
<dbReference type="OMA" id="QHANCRN"/>
<dbReference type="OrthoDB" id="1523883at2759"/>
<dbReference type="PhylomeDB" id="Q6XMI3"/>
<dbReference type="BioCyc" id="MetaCyc:AT3G11480-MONOMER"/>
<dbReference type="BRENDA" id="2.1.1.273">
    <property type="organism ID" value="399"/>
</dbReference>
<dbReference type="BRENDA" id="2.1.1.274">
    <property type="organism ID" value="399"/>
</dbReference>
<dbReference type="PRO" id="PR:Q6XMI3"/>
<dbReference type="Proteomes" id="UP000006548">
    <property type="component" value="Chromosome 3"/>
</dbReference>
<dbReference type="ExpressionAtlas" id="Q6XMI3">
    <property type="expression patterns" value="baseline and differential"/>
</dbReference>
<dbReference type="GO" id="GO:0052624">
    <property type="term" value="F:2-phytyl-1,4-naphthoquinone methyltransferase activity"/>
    <property type="evidence" value="ECO:0000314"/>
    <property type="project" value="TAIR"/>
</dbReference>
<dbReference type="GO" id="GO:0046872">
    <property type="term" value="F:metal ion binding"/>
    <property type="evidence" value="ECO:0007669"/>
    <property type="project" value="UniProtKB-KW"/>
</dbReference>
<dbReference type="GO" id="GO:0080150">
    <property type="term" value="F:S-adenosyl-L-methionine:benzoic acid carboxyl methyl transferase activity"/>
    <property type="evidence" value="ECO:0000314"/>
    <property type="project" value="TAIR"/>
</dbReference>
<dbReference type="GO" id="GO:0008757">
    <property type="term" value="F:S-adenosylmethionine-dependent methyltransferase activity"/>
    <property type="evidence" value="ECO:0000314"/>
    <property type="project" value="TAIR"/>
</dbReference>
<dbReference type="GO" id="GO:0006952">
    <property type="term" value="P:defense response"/>
    <property type="evidence" value="ECO:0000270"/>
    <property type="project" value="TAIR"/>
</dbReference>
<dbReference type="GO" id="GO:0032259">
    <property type="term" value="P:methylation"/>
    <property type="evidence" value="ECO:0007669"/>
    <property type="project" value="UniProtKB-KW"/>
</dbReference>
<dbReference type="GO" id="GO:0051707">
    <property type="term" value="P:response to other organism"/>
    <property type="evidence" value="ECO:0000270"/>
    <property type="project" value="TAIR"/>
</dbReference>
<dbReference type="GO" id="GO:0009611">
    <property type="term" value="P:response to wounding"/>
    <property type="evidence" value="ECO:0000270"/>
    <property type="project" value="TAIR"/>
</dbReference>
<dbReference type="Gene3D" id="1.10.1200.270">
    <property type="entry name" value="Methyltransferase, alpha-helical capping domain"/>
    <property type="match status" value="1"/>
</dbReference>
<dbReference type="Gene3D" id="3.40.50.150">
    <property type="entry name" value="Vaccinia Virus protein VP39"/>
    <property type="match status" value="1"/>
</dbReference>
<dbReference type="InterPro" id="IPR005299">
    <property type="entry name" value="MeTrfase_7"/>
</dbReference>
<dbReference type="InterPro" id="IPR042086">
    <property type="entry name" value="MeTrfase_capping"/>
</dbReference>
<dbReference type="InterPro" id="IPR029063">
    <property type="entry name" value="SAM-dependent_MTases_sf"/>
</dbReference>
<dbReference type="PANTHER" id="PTHR31009">
    <property type="entry name" value="S-ADENOSYL-L-METHIONINE:CARBOXYL METHYLTRANSFERASE FAMILY PROTEIN"/>
    <property type="match status" value="1"/>
</dbReference>
<dbReference type="Pfam" id="PF03492">
    <property type="entry name" value="Methyltransf_7"/>
    <property type="match status" value="1"/>
</dbReference>
<dbReference type="SUPFAM" id="SSF53335">
    <property type="entry name" value="S-adenosyl-L-methionine-dependent methyltransferases"/>
    <property type="match status" value="1"/>
</dbReference>
<organism>
    <name type="scientific">Arabidopsis thaliana</name>
    <name type="common">Mouse-ear cress</name>
    <dbReference type="NCBI Taxonomy" id="3702"/>
    <lineage>
        <taxon>Eukaryota</taxon>
        <taxon>Viridiplantae</taxon>
        <taxon>Streptophyta</taxon>
        <taxon>Embryophyta</taxon>
        <taxon>Tracheophyta</taxon>
        <taxon>Spermatophyta</taxon>
        <taxon>Magnoliopsida</taxon>
        <taxon>eudicotyledons</taxon>
        <taxon>Gunneridae</taxon>
        <taxon>Pentapetalae</taxon>
        <taxon>rosids</taxon>
        <taxon>malvids</taxon>
        <taxon>Brassicales</taxon>
        <taxon>Brassicaceae</taxon>
        <taxon>Camelineae</taxon>
        <taxon>Arabidopsis</taxon>
    </lineage>
</organism>
<proteinExistence type="evidence at protein level"/>